<feature type="chain" id="PRO_0000114838" description="Ubiquitin">
    <location>
        <begin position="1"/>
        <end position="76"/>
    </location>
</feature>
<feature type="chain" id="PRO_0000137678" description="Small ribosomal subunit protein eS31">
    <location>
        <begin position="77"/>
        <end position="143" status="greater than"/>
    </location>
</feature>
<feature type="domain" description="Ubiquitin-like" evidence="2">
    <location>
        <begin position="1"/>
        <end position="76"/>
    </location>
</feature>
<feature type="zinc finger region" description="C4-type">
    <location>
        <begin position="121"/>
        <end position="143" status="greater than"/>
    </location>
</feature>
<feature type="cross-link" description="Glycyl lysine isopeptide (Lys-Gly) (interchain with G-Cter in ubiquitin)" evidence="1">
    <location>
        <position position="48"/>
    </location>
</feature>
<feature type="cross-link" description="Glycyl lysine isopeptide (Gly-Lys) (interchain with K-? in acceptor proteins)" evidence="2">
    <location>
        <position position="76"/>
    </location>
</feature>
<feature type="non-terminal residue">
    <location>
        <position position="143"/>
    </location>
</feature>
<proteinExistence type="evidence at transcript level"/>
<name>RS27A_DAUCA</name>
<keyword id="KW-0963">Cytoplasm</keyword>
<keyword id="KW-1017">Isopeptide bond</keyword>
<keyword id="KW-0479">Metal-binding</keyword>
<keyword id="KW-0539">Nucleus</keyword>
<keyword id="KW-0687">Ribonucleoprotein</keyword>
<keyword id="KW-0689">Ribosomal protein</keyword>
<keyword id="KW-0832">Ubl conjugation</keyword>
<keyword id="KW-0862">Zinc</keyword>
<keyword id="KW-0863">Zinc-finger</keyword>
<reference key="1">
    <citation type="online journal article" date="1998" name="Plant Gene Register">
        <title>Cloning and expression analysis of a cDNA for carrot ubiquitin carboxyl extension protein.</title>
        <authorList>
            <person name="Balestrazzi A."/>
            <person name="Cella R."/>
            <person name="Carbonera D."/>
        </authorList>
        <locator>PGR98-109</locator>
    </citation>
    <scope>NUCLEOTIDE SEQUENCE [MRNA]</scope>
    <source>
        <strain>cv. Lunga di Amsterdam</strain>
    </source>
</reference>
<sequence length="143" mass="16356">MQIFVKTLTGKTITLEVESSDTIDNVKAKIQDKEGIPPDQQRLIFAGKQLEDGRTLADYNIQKESTLHLVLRLRGGGKKRKKKTYTKPKKTKHKHRKVKLAVLQFYKVDESGKVQRLRKECPNGECGAGTFMANHFDRHYCGK</sequence>
<comment type="function">
    <molecule>Ubiquitin</molecule>
    <text evidence="1">Exists either covalently attached to another protein, or free (unanchored). When covalently bound, it is conjugated to target proteins via an isopeptide bond either as a monomer (monoubiquitin), a polymer linked via different Lys residues of the ubiquitin (polyubiquitin chains) or a linear polymer linked via the initiator Met of the ubiquitin (linear polyubiquitin chains). Polyubiquitin chains, when attached to a target protein, have different functions depending on the Lys residue of the ubiquitin that is linked: Lys-48-linked is involved in protein degradation via the proteasome. Linear polymer chains formed via attachment by the initiator Met lead to cell signaling. Ubiquitin is usually conjugated to Lys residues of target proteins, however, in rare cases, conjugation to Cys or Ser residues has been observed. When polyubiquitin is free (unanchored-polyubiquitin), it also has distinct roles, such as in activation of protein kinases, and in signaling (By similarity).</text>
</comment>
<comment type="function">
    <molecule>Small ribosomal subunit protein eS31</molecule>
    <text>Component of the 40S subunit of the ribosome.</text>
</comment>
<comment type="subunit">
    <molecule>Small ribosomal subunit protein eS31</molecule>
    <text evidence="1">Part of the 40S ribosomal subunit.</text>
</comment>
<comment type="subcellular location">
    <molecule>Ubiquitin</molecule>
    <subcellularLocation>
        <location evidence="1">Cytoplasm</location>
    </subcellularLocation>
    <subcellularLocation>
        <location evidence="1">Nucleus</location>
    </subcellularLocation>
</comment>
<comment type="miscellaneous">
    <text>Ubiquitin is generally synthesized as a polyubiquitin precursor with tandem head to tail repeats. Often, there are one to three additional amino acids after the last repeat, removed in the mature protein. Alternatively, ubiquitin extension protein is synthesized as a single copy of ubiquitin fused to a ribosomal protein (either eL40 or eS31) or to an ubiquitin-related protein (either RUB1 or RUB2). Following translation, extension protein is cleaved from ubiquitin.</text>
</comment>
<comment type="similarity">
    <text evidence="3">In the N-terminal section; belongs to the ubiquitin family.</text>
</comment>
<comment type="similarity">
    <text evidence="3">In the C-terminal section; belongs to the eukaryotic ribosomal protein eS31 family.</text>
</comment>
<evidence type="ECO:0000250" key="1"/>
<evidence type="ECO:0000255" key="2">
    <source>
        <dbReference type="PROSITE-ProRule" id="PRU00214"/>
    </source>
</evidence>
<evidence type="ECO:0000305" key="3"/>
<organism>
    <name type="scientific">Daucus carota</name>
    <name type="common">Wild carrot</name>
    <dbReference type="NCBI Taxonomy" id="4039"/>
    <lineage>
        <taxon>Eukaryota</taxon>
        <taxon>Viridiplantae</taxon>
        <taxon>Streptophyta</taxon>
        <taxon>Embryophyta</taxon>
        <taxon>Tracheophyta</taxon>
        <taxon>Spermatophyta</taxon>
        <taxon>Magnoliopsida</taxon>
        <taxon>eudicotyledons</taxon>
        <taxon>Gunneridae</taxon>
        <taxon>Pentapetalae</taxon>
        <taxon>asterids</taxon>
        <taxon>campanulids</taxon>
        <taxon>Apiales</taxon>
        <taxon>Apiaceae</taxon>
        <taxon>Apioideae</taxon>
        <taxon>Scandiceae</taxon>
        <taxon>Daucinae</taxon>
        <taxon>Daucus</taxon>
        <taxon>Daucus sect. Daucus</taxon>
    </lineage>
</organism>
<accession>P59272</accession>
<accession>O82079</accession>
<accession>P03993</accession>
<accession>P69312</accession>
<protein>
    <recommendedName>
        <fullName evidence="3">Ubiquitin-ribosomal protein eS31 fusion protein</fullName>
    </recommendedName>
    <component>
        <recommendedName>
            <fullName>Ubiquitin</fullName>
        </recommendedName>
    </component>
    <component>
        <recommendedName>
            <fullName evidence="3">Small ribosomal subunit protein eS31</fullName>
        </recommendedName>
        <alternativeName>
            <fullName>40S ribosomal protein S27a</fullName>
        </alternativeName>
    </component>
</protein>
<dbReference type="EMBL" id="U68751">
    <property type="protein sequence ID" value="AAC26159.1"/>
    <property type="molecule type" value="mRNA"/>
</dbReference>
<dbReference type="SMR" id="P59272"/>
<dbReference type="GO" id="GO:0005737">
    <property type="term" value="C:cytoplasm"/>
    <property type="evidence" value="ECO:0007669"/>
    <property type="project" value="UniProtKB-SubCell"/>
</dbReference>
<dbReference type="GO" id="GO:0005634">
    <property type="term" value="C:nucleus"/>
    <property type="evidence" value="ECO:0007669"/>
    <property type="project" value="UniProtKB-SubCell"/>
</dbReference>
<dbReference type="GO" id="GO:1990904">
    <property type="term" value="C:ribonucleoprotein complex"/>
    <property type="evidence" value="ECO:0007669"/>
    <property type="project" value="UniProtKB-KW"/>
</dbReference>
<dbReference type="GO" id="GO:0005840">
    <property type="term" value="C:ribosome"/>
    <property type="evidence" value="ECO:0007669"/>
    <property type="project" value="UniProtKB-KW"/>
</dbReference>
<dbReference type="GO" id="GO:0003729">
    <property type="term" value="F:mRNA binding"/>
    <property type="evidence" value="ECO:0007669"/>
    <property type="project" value="UniProtKB-ARBA"/>
</dbReference>
<dbReference type="GO" id="GO:0003735">
    <property type="term" value="F:structural constituent of ribosome"/>
    <property type="evidence" value="ECO:0007669"/>
    <property type="project" value="InterPro"/>
</dbReference>
<dbReference type="GO" id="GO:0008270">
    <property type="term" value="F:zinc ion binding"/>
    <property type="evidence" value="ECO:0007669"/>
    <property type="project" value="UniProtKB-KW"/>
</dbReference>
<dbReference type="GO" id="GO:0006412">
    <property type="term" value="P:translation"/>
    <property type="evidence" value="ECO:0007669"/>
    <property type="project" value="InterPro"/>
</dbReference>
<dbReference type="CDD" id="cd01803">
    <property type="entry name" value="Ubl_ubiquitin"/>
    <property type="match status" value="1"/>
</dbReference>
<dbReference type="FunFam" id="3.10.20.90:FF:000008">
    <property type="entry name" value="Ubiquitin-40S ribosomal protein S27a"/>
    <property type="match status" value="1"/>
</dbReference>
<dbReference type="Gene3D" id="6.20.50.150">
    <property type="match status" value="1"/>
</dbReference>
<dbReference type="Gene3D" id="3.10.20.90">
    <property type="entry name" value="Phosphatidylinositol 3-kinase Catalytic Subunit, Chain A, domain 1"/>
    <property type="match status" value="1"/>
</dbReference>
<dbReference type="InterPro" id="IPR002906">
    <property type="entry name" value="Ribosomal_eS31"/>
</dbReference>
<dbReference type="InterPro" id="IPR038582">
    <property type="entry name" value="Ribosomal_eS31_euk-type_sf"/>
</dbReference>
<dbReference type="InterPro" id="IPR011332">
    <property type="entry name" value="Ribosomal_zn-bd"/>
</dbReference>
<dbReference type="InterPro" id="IPR000626">
    <property type="entry name" value="Ubiquitin-like_dom"/>
</dbReference>
<dbReference type="InterPro" id="IPR029071">
    <property type="entry name" value="Ubiquitin-like_domsf"/>
</dbReference>
<dbReference type="InterPro" id="IPR019954">
    <property type="entry name" value="Ubiquitin_CS"/>
</dbReference>
<dbReference type="InterPro" id="IPR019956">
    <property type="entry name" value="Ubiquitin_dom"/>
</dbReference>
<dbReference type="InterPro" id="IPR050158">
    <property type="entry name" value="Ubiquitin_ubiquitin-like"/>
</dbReference>
<dbReference type="PANTHER" id="PTHR10666">
    <property type="entry name" value="UBIQUITIN"/>
    <property type="match status" value="1"/>
</dbReference>
<dbReference type="Pfam" id="PF01599">
    <property type="entry name" value="Ribosomal_S27"/>
    <property type="match status" value="1"/>
</dbReference>
<dbReference type="Pfam" id="PF00240">
    <property type="entry name" value="ubiquitin"/>
    <property type="match status" value="1"/>
</dbReference>
<dbReference type="PRINTS" id="PR00348">
    <property type="entry name" value="UBIQUITIN"/>
</dbReference>
<dbReference type="SMART" id="SM01402">
    <property type="entry name" value="Ribosomal_S27"/>
    <property type="match status" value="1"/>
</dbReference>
<dbReference type="SMART" id="SM00213">
    <property type="entry name" value="UBQ"/>
    <property type="match status" value="1"/>
</dbReference>
<dbReference type="SUPFAM" id="SSF54236">
    <property type="entry name" value="Ubiquitin-like"/>
    <property type="match status" value="1"/>
</dbReference>
<dbReference type="SUPFAM" id="SSF57829">
    <property type="entry name" value="Zn-binding ribosomal proteins"/>
    <property type="match status" value="1"/>
</dbReference>
<dbReference type="PROSITE" id="PS00299">
    <property type="entry name" value="UBIQUITIN_1"/>
    <property type="match status" value="1"/>
</dbReference>
<dbReference type="PROSITE" id="PS50053">
    <property type="entry name" value="UBIQUITIN_2"/>
    <property type="match status" value="1"/>
</dbReference>